<keyword id="KW-0067">ATP-binding</keyword>
<keyword id="KW-0238">DNA-binding</keyword>
<keyword id="KW-0479">Metal-binding</keyword>
<keyword id="KW-0547">Nucleotide-binding</keyword>
<keyword id="KW-1185">Reference proteome</keyword>
<keyword id="KW-0678">Repressor</keyword>
<keyword id="KW-0804">Transcription</keyword>
<keyword id="KW-0805">Transcription regulation</keyword>
<keyword id="KW-0862">Zinc</keyword>
<keyword id="KW-0863">Zinc-finger</keyword>
<organism>
    <name type="scientific">Xanthomonas campestris pv. campestris (strain ATCC 33913 / DSM 3586 / NCPPB 528 / LMG 568 / P 25)</name>
    <dbReference type="NCBI Taxonomy" id="190485"/>
    <lineage>
        <taxon>Bacteria</taxon>
        <taxon>Pseudomonadati</taxon>
        <taxon>Pseudomonadota</taxon>
        <taxon>Gammaproteobacteria</taxon>
        <taxon>Lysobacterales</taxon>
        <taxon>Lysobacteraceae</taxon>
        <taxon>Xanthomonas</taxon>
    </lineage>
</organism>
<accession>Q8PCN3</accession>
<protein>
    <recommendedName>
        <fullName evidence="1">Transcriptional repressor NrdR</fullName>
    </recommendedName>
</protein>
<proteinExistence type="inferred from homology"/>
<dbReference type="EMBL" id="AE008922">
    <property type="protein sequence ID" value="AAM40007.1"/>
    <property type="molecule type" value="Genomic_DNA"/>
</dbReference>
<dbReference type="RefSeq" id="NP_636083.1">
    <property type="nucleotide sequence ID" value="NC_003902.1"/>
</dbReference>
<dbReference type="RefSeq" id="WP_005997276.1">
    <property type="nucleotide sequence ID" value="NC_003902.1"/>
</dbReference>
<dbReference type="SMR" id="Q8PCN3"/>
<dbReference type="STRING" id="190485.XCC0691"/>
<dbReference type="EnsemblBacteria" id="AAM40007">
    <property type="protein sequence ID" value="AAM40007"/>
    <property type="gene ID" value="XCC0691"/>
</dbReference>
<dbReference type="GeneID" id="95583103"/>
<dbReference type="KEGG" id="xcc:XCC0691"/>
<dbReference type="PATRIC" id="fig|190485.4.peg.756"/>
<dbReference type="eggNOG" id="COG1327">
    <property type="taxonomic scope" value="Bacteria"/>
</dbReference>
<dbReference type="HOGENOM" id="CLU_108412_0_0_6"/>
<dbReference type="OrthoDB" id="9807461at2"/>
<dbReference type="Proteomes" id="UP000001010">
    <property type="component" value="Chromosome"/>
</dbReference>
<dbReference type="GO" id="GO:0005524">
    <property type="term" value="F:ATP binding"/>
    <property type="evidence" value="ECO:0007669"/>
    <property type="project" value="UniProtKB-KW"/>
</dbReference>
<dbReference type="GO" id="GO:0003690">
    <property type="term" value="F:double-stranded DNA binding"/>
    <property type="evidence" value="ECO:0000318"/>
    <property type="project" value="GO_Central"/>
</dbReference>
<dbReference type="GO" id="GO:0008270">
    <property type="term" value="F:zinc ion binding"/>
    <property type="evidence" value="ECO:0007669"/>
    <property type="project" value="UniProtKB-UniRule"/>
</dbReference>
<dbReference type="GO" id="GO:0045892">
    <property type="term" value="P:negative regulation of DNA-templated transcription"/>
    <property type="evidence" value="ECO:0000318"/>
    <property type="project" value="GO_Central"/>
</dbReference>
<dbReference type="HAMAP" id="MF_00440">
    <property type="entry name" value="NrdR"/>
    <property type="match status" value="1"/>
</dbReference>
<dbReference type="InterPro" id="IPR005144">
    <property type="entry name" value="ATP-cone_dom"/>
</dbReference>
<dbReference type="InterPro" id="IPR055173">
    <property type="entry name" value="NrdR-like_N"/>
</dbReference>
<dbReference type="InterPro" id="IPR003796">
    <property type="entry name" value="RNR_NrdR-like"/>
</dbReference>
<dbReference type="NCBIfam" id="TIGR00244">
    <property type="entry name" value="transcriptional regulator NrdR"/>
    <property type="match status" value="1"/>
</dbReference>
<dbReference type="PANTHER" id="PTHR30455">
    <property type="entry name" value="TRANSCRIPTIONAL REPRESSOR NRDR"/>
    <property type="match status" value="1"/>
</dbReference>
<dbReference type="PANTHER" id="PTHR30455:SF2">
    <property type="entry name" value="TRANSCRIPTIONAL REPRESSOR NRDR"/>
    <property type="match status" value="1"/>
</dbReference>
<dbReference type="Pfam" id="PF03477">
    <property type="entry name" value="ATP-cone"/>
    <property type="match status" value="1"/>
</dbReference>
<dbReference type="Pfam" id="PF22811">
    <property type="entry name" value="Zn_ribbon_NrdR"/>
    <property type="match status" value="1"/>
</dbReference>
<dbReference type="PROSITE" id="PS51161">
    <property type="entry name" value="ATP_CONE"/>
    <property type="match status" value="1"/>
</dbReference>
<feature type="chain" id="PRO_0000182382" description="Transcriptional repressor NrdR">
    <location>
        <begin position="1"/>
        <end position="174"/>
    </location>
</feature>
<feature type="domain" description="ATP-cone" evidence="1">
    <location>
        <begin position="49"/>
        <end position="139"/>
    </location>
</feature>
<feature type="zinc finger region" evidence="1">
    <location>
        <begin position="3"/>
        <end position="34"/>
    </location>
</feature>
<evidence type="ECO:0000255" key="1">
    <source>
        <dbReference type="HAMAP-Rule" id="MF_00440"/>
    </source>
</evidence>
<comment type="function">
    <text evidence="1">Negatively regulates transcription of bacterial ribonucleotide reductase nrd genes and operons by binding to NrdR-boxes.</text>
</comment>
<comment type="cofactor">
    <cofactor evidence="1">
        <name>Zn(2+)</name>
        <dbReference type="ChEBI" id="CHEBI:29105"/>
    </cofactor>
    <text evidence="1">Binds 1 zinc ion.</text>
</comment>
<comment type="similarity">
    <text evidence="1">Belongs to the NrdR family.</text>
</comment>
<name>NRDR_XANCP</name>
<reference key="1">
    <citation type="journal article" date="2002" name="Nature">
        <title>Comparison of the genomes of two Xanthomonas pathogens with differing host specificities.</title>
        <authorList>
            <person name="da Silva A.C.R."/>
            <person name="Ferro J.A."/>
            <person name="Reinach F.C."/>
            <person name="Farah C.S."/>
            <person name="Furlan L.R."/>
            <person name="Quaggio R.B."/>
            <person name="Monteiro-Vitorello C.B."/>
            <person name="Van Sluys M.A."/>
            <person name="Almeida N.F. Jr."/>
            <person name="Alves L.M.C."/>
            <person name="do Amaral A.M."/>
            <person name="Bertolini M.C."/>
            <person name="Camargo L.E.A."/>
            <person name="Camarotte G."/>
            <person name="Cannavan F."/>
            <person name="Cardozo J."/>
            <person name="Chambergo F."/>
            <person name="Ciapina L.P."/>
            <person name="Cicarelli R.M.B."/>
            <person name="Coutinho L.L."/>
            <person name="Cursino-Santos J.R."/>
            <person name="El-Dorry H."/>
            <person name="Faria J.B."/>
            <person name="Ferreira A.J.S."/>
            <person name="Ferreira R.C.C."/>
            <person name="Ferro M.I.T."/>
            <person name="Formighieri E.F."/>
            <person name="Franco M.C."/>
            <person name="Greggio C.C."/>
            <person name="Gruber A."/>
            <person name="Katsuyama A.M."/>
            <person name="Kishi L.T."/>
            <person name="Leite R.P."/>
            <person name="Lemos E.G.M."/>
            <person name="Lemos M.V.F."/>
            <person name="Locali E.C."/>
            <person name="Machado M.A."/>
            <person name="Madeira A.M.B.N."/>
            <person name="Martinez-Rossi N.M."/>
            <person name="Martins E.C."/>
            <person name="Meidanis J."/>
            <person name="Menck C.F.M."/>
            <person name="Miyaki C.Y."/>
            <person name="Moon D.H."/>
            <person name="Moreira L.M."/>
            <person name="Novo M.T.M."/>
            <person name="Okura V.K."/>
            <person name="Oliveira M.C."/>
            <person name="Oliveira V.R."/>
            <person name="Pereira H.A."/>
            <person name="Rossi A."/>
            <person name="Sena J.A.D."/>
            <person name="Silva C."/>
            <person name="de Souza R.F."/>
            <person name="Spinola L.A.F."/>
            <person name="Takita M.A."/>
            <person name="Tamura R.E."/>
            <person name="Teixeira E.C."/>
            <person name="Tezza R.I.D."/>
            <person name="Trindade dos Santos M."/>
            <person name="Truffi D."/>
            <person name="Tsai S.M."/>
            <person name="White F.F."/>
            <person name="Setubal J.C."/>
            <person name="Kitajima J.P."/>
        </authorList>
    </citation>
    <scope>NUCLEOTIDE SEQUENCE [LARGE SCALE GENOMIC DNA]</scope>
    <source>
        <strain>ATCC 33913 / DSM 3586 / NCPPB 528 / LMG 568 / P 25</strain>
    </source>
</reference>
<gene>
    <name evidence="1" type="primary">nrdR</name>
    <name type="ordered locus">XCC0691</name>
</gene>
<sequence length="174" mass="19947">MHCPFCQHNDTRVIDSRVSEDGTTIRRRRECEACGERFSTLETIELKLPTVVKSDGGREAFDARKLRTSFDRALQKRPVSEEQIEAAVRAVVHQLRMSGEREVGSLRVGEYVMVELRKLDHVGYVRFASVYRSFQDVADFREEIEKLERELPVGSEQLPLLEAALERAGKPGKR</sequence>